<feature type="chain" id="PRO_0000207730" description="Calpain-12">
    <location>
        <begin position="1"/>
        <end position="719"/>
    </location>
</feature>
<feature type="domain" description="Calpain catalytic" evidence="2">
    <location>
        <begin position="45"/>
        <end position="341"/>
    </location>
</feature>
<feature type="domain" description="EF-hand" evidence="3">
    <location>
        <begin position="620"/>
        <end position="655"/>
    </location>
</feature>
<feature type="region of interest" description="Domain III">
    <location>
        <begin position="342"/>
        <end position="540"/>
    </location>
</feature>
<feature type="region of interest" description="Disordered" evidence="4">
    <location>
        <begin position="393"/>
        <end position="418"/>
    </location>
</feature>
<feature type="region of interest" description="Domain IV">
    <location>
        <begin position="541"/>
        <end position="719"/>
    </location>
</feature>
<feature type="compositionally biased region" description="Acidic residues" evidence="4">
    <location>
        <begin position="393"/>
        <end position="402"/>
    </location>
</feature>
<feature type="active site" evidence="1">
    <location>
        <position position="105"/>
    </location>
</feature>
<feature type="active site" evidence="1">
    <location>
        <position position="259"/>
    </location>
</feature>
<feature type="active site" evidence="1">
    <location>
        <position position="283"/>
    </location>
</feature>
<feature type="binding site" evidence="3">
    <location>
        <position position="633"/>
    </location>
    <ligand>
        <name>Ca(2+)</name>
        <dbReference type="ChEBI" id="CHEBI:29108"/>
    </ligand>
</feature>
<feature type="binding site" evidence="3">
    <location>
        <position position="635"/>
    </location>
    <ligand>
        <name>Ca(2+)</name>
        <dbReference type="ChEBI" id="CHEBI:29108"/>
    </ligand>
</feature>
<feature type="binding site" evidence="3">
    <location>
        <position position="637"/>
    </location>
    <ligand>
        <name>Ca(2+)</name>
        <dbReference type="ChEBI" id="CHEBI:29108"/>
    </ligand>
</feature>
<feature type="binding site" evidence="3">
    <location>
        <position position="639"/>
    </location>
    <ligand>
        <name>Ca(2+)</name>
        <dbReference type="ChEBI" id="CHEBI:29108"/>
    </ligand>
</feature>
<feature type="binding site" evidence="3">
    <location>
        <position position="644"/>
    </location>
    <ligand>
        <name>Ca(2+)</name>
        <dbReference type="ChEBI" id="CHEBI:29108"/>
    </ligand>
</feature>
<feature type="sequence variant" id="VAR_051516" description="In dbSNP:rs12983010.">
    <original>C</original>
    <variation>R</variation>
    <location>
        <position position="287"/>
    </location>
</feature>
<accession>Q6ZSI9</accession>
<organism>
    <name type="scientific">Homo sapiens</name>
    <name type="common">Human</name>
    <dbReference type="NCBI Taxonomy" id="9606"/>
    <lineage>
        <taxon>Eukaryota</taxon>
        <taxon>Metazoa</taxon>
        <taxon>Chordata</taxon>
        <taxon>Craniata</taxon>
        <taxon>Vertebrata</taxon>
        <taxon>Euteleostomi</taxon>
        <taxon>Mammalia</taxon>
        <taxon>Eutheria</taxon>
        <taxon>Euarchontoglires</taxon>
        <taxon>Primates</taxon>
        <taxon>Haplorrhini</taxon>
        <taxon>Catarrhini</taxon>
        <taxon>Hominidae</taxon>
        <taxon>Homo</taxon>
    </lineage>
</organism>
<protein>
    <recommendedName>
        <fullName>Calpain-12</fullName>
        <ecNumber>3.4.22.-</ecNumber>
    </recommendedName>
    <alternativeName>
        <fullName>Calcium-activated neutral proteinase 12</fullName>
        <shortName>CANP 12</shortName>
    </alternativeName>
</protein>
<sequence>MASSSGRVTIQLVDEEAGVGAGRLQLFRGQSYEAIRAACLDSGILFRDPYFPAGPDALGYDQLGPDSEKAKGVKWMRPHEFCAEPKFICEDMSRTDVCQGSLGNCWFLAAAASLTLYPRLLRRVVPPGQDFQHGYAGVFHFQLWQFGRWMDVVVDDRLPVREGKLMFVRSEQRNEFWAPLLEKAYAKLHGSYEVMRGGHMNEAFVDFTGGVGEVLYLRQNSMGLFSALRHALAKESLVGATALSDRGEYRTEEGLVKGHAYSITGTHKVFLGFTKVRLLRLRNPWGCVEWTGAWSDSCPRWDTLPTECRDALLVKKEDGEFWMELRDFLLHFDTVQICSLSPEVLGPSPEGGGWHVHTFQGRWVRGFNSGGSQPNAETFWTNPQFRLTLLEPDEEDDEDEEGPWGGWGAAGARGPARGGRTPKCTVLLSLIQRNRRRLRAKGLTYLTVGFHVFQIPEELLGLWDSPRSHALLPRLLRADRSPLSARRDVTRRCCLRPGHYLVVPSTAHAGDEADFTLRVFSERRHTAVEIDDVISADLQSLQGPYLPLELGLEQLFQELAGEEEELNASQLQALLSIALEPARAHTSTPREIGLRTCEQLLQCFGHGQSLALHHFQQLWGYLLEWQAIFNKFDEDTSGTMNSYELRLALNAAGFHLNNQLTQTLTSRYRDSRLRVDFERFVSCVAHLTCIFCHCSQHLDGGEGVICLTHRQWMEVATFS</sequence>
<evidence type="ECO:0000250" key="1"/>
<evidence type="ECO:0000255" key="2">
    <source>
        <dbReference type="PROSITE-ProRule" id="PRU00239"/>
    </source>
</evidence>
<evidence type="ECO:0000255" key="3">
    <source>
        <dbReference type="PROSITE-ProRule" id="PRU00448"/>
    </source>
</evidence>
<evidence type="ECO:0000256" key="4">
    <source>
        <dbReference type="SAM" id="MobiDB-lite"/>
    </source>
</evidence>
<evidence type="ECO:0000305" key="5"/>
<keyword id="KW-0106">Calcium</keyword>
<keyword id="KW-0378">Hydrolase</keyword>
<keyword id="KW-0479">Metal-binding</keyword>
<keyword id="KW-0645">Protease</keyword>
<keyword id="KW-1267">Proteomics identification</keyword>
<keyword id="KW-1185">Reference proteome</keyword>
<keyword id="KW-0788">Thiol protease</keyword>
<name>CAN12_HUMAN</name>
<comment type="function">
    <text evidence="1">Calcium-regulated non-lysosomal thiol-protease.</text>
</comment>
<comment type="similarity">
    <text evidence="5">Belongs to the peptidase C2 family.</text>
</comment>
<reference key="1">
    <citation type="journal article" date="2004" name="Nat. Genet.">
        <title>Complete sequencing and characterization of 21,243 full-length human cDNAs.</title>
        <authorList>
            <person name="Ota T."/>
            <person name="Suzuki Y."/>
            <person name="Nishikawa T."/>
            <person name="Otsuki T."/>
            <person name="Sugiyama T."/>
            <person name="Irie R."/>
            <person name="Wakamatsu A."/>
            <person name="Hayashi K."/>
            <person name="Sato H."/>
            <person name="Nagai K."/>
            <person name="Kimura K."/>
            <person name="Makita H."/>
            <person name="Sekine M."/>
            <person name="Obayashi M."/>
            <person name="Nishi T."/>
            <person name="Shibahara T."/>
            <person name="Tanaka T."/>
            <person name="Ishii S."/>
            <person name="Yamamoto J."/>
            <person name="Saito K."/>
            <person name="Kawai Y."/>
            <person name="Isono Y."/>
            <person name="Nakamura Y."/>
            <person name="Nagahari K."/>
            <person name="Murakami K."/>
            <person name="Yasuda T."/>
            <person name="Iwayanagi T."/>
            <person name="Wagatsuma M."/>
            <person name="Shiratori A."/>
            <person name="Sudo H."/>
            <person name="Hosoiri T."/>
            <person name="Kaku Y."/>
            <person name="Kodaira H."/>
            <person name="Kondo H."/>
            <person name="Sugawara M."/>
            <person name="Takahashi M."/>
            <person name="Kanda K."/>
            <person name="Yokoi T."/>
            <person name="Furuya T."/>
            <person name="Kikkawa E."/>
            <person name="Omura Y."/>
            <person name="Abe K."/>
            <person name="Kamihara K."/>
            <person name="Katsuta N."/>
            <person name="Sato K."/>
            <person name="Tanikawa M."/>
            <person name="Yamazaki M."/>
            <person name="Ninomiya K."/>
            <person name="Ishibashi T."/>
            <person name="Yamashita H."/>
            <person name="Murakawa K."/>
            <person name="Fujimori K."/>
            <person name="Tanai H."/>
            <person name="Kimata M."/>
            <person name="Watanabe M."/>
            <person name="Hiraoka S."/>
            <person name="Chiba Y."/>
            <person name="Ishida S."/>
            <person name="Ono Y."/>
            <person name="Takiguchi S."/>
            <person name="Watanabe S."/>
            <person name="Yosida M."/>
            <person name="Hotuta T."/>
            <person name="Kusano J."/>
            <person name="Kanehori K."/>
            <person name="Takahashi-Fujii A."/>
            <person name="Hara H."/>
            <person name="Tanase T.-O."/>
            <person name="Nomura Y."/>
            <person name="Togiya S."/>
            <person name="Komai F."/>
            <person name="Hara R."/>
            <person name="Takeuchi K."/>
            <person name="Arita M."/>
            <person name="Imose N."/>
            <person name="Musashino K."/>
            <person name="Yuuki H."/>
            <person name="Oshima A."/>
            <person name="Sasaki N."/>
            <person name="Aotsuka S."/>
            <person name="Yoshikawa Y."/>
            <person name="Matsunawa H."/>
            <person name="Ichihara T."/>
            <person name="Shiohata N."/>
            <person name="Sano S."/>
            <person name="Moriya S."/>
            <person name="Momiyama H."/>
            <person name="Satoh N."/>
            <person name="Takami S."/>
            <person name="Terashima Y."/>
            <person name="Suzuki O."/>
            <person name="Nakagawa S."/>
            <person name="Senoh A."/>
            <person name="Mizoguchi H."/>
            <person name="Goto Y."/>
            <person name="Shimizu F."/>
            <person name="Wakebe H."/>
            <person name="Hishigaki H."/>
            <person name="Watanabe T."/>
            <person name="Sugiyama A."/>
            <person name="Takemoto M."/>
            <person name="Kawakami B."/>
            <person name="Yamazaki M."/>
            <person name="Watanabe K."/>
            <person name="Kumagai A."/>
            <person name="Itakura S."/>
            <person name="Fukuzumi Y."/>
            <person name="Fujimori Y."/>
            <person name="Komiyama M."/>
            <person name="Tashiro H."/>
            <person name="Tanigami A."/>
            <person name="Fujiwara T."/>
            <person name="Ono T."/>
            <person name="Yamada K."/>
            <person name="Fujii Y."/>
            <person name="Ozaki K."/>
            <person name="Hirao M."/>
            <person name="Ohmori Y."/>
            <person name="Kawabata A."/>
            <person name="Hikiji T."/>
            <person name="Kobatake N."/>
            <person name="Inagaki H."/>
            <person name="Ikema Y."/>
            <person name="Okamoto S."/>
            <person name="Okitani R."/>
            <person name="Kawakami T."/>
            <person name="Noguchi S."/>
            <person name="Itoh T."/>
            <person name="Shigeta K."/>
            <person name="Senba T."/>
            <person name="Matsumura K."/>
            <person name="Nakajima Y."/>
            <person name="Mizuno T."/>
            <person name="Morinaga M."/>
            <person name="Sasaki M."/>
            <person name="Togashi T."/>
            <person name="Oyama M."/>
            <person name="Hata H."/>
            <person name="Watanabe M."/>
            <person name="Komatsu T."/>
            <person name="Mizushima-Sugano J."/>
            <person name="Satoh T."/>
            <person name="Shirai Y."/>
            <person name="Takahashi Y."/>
            <person name="Nakagawa K."/>
            <person name="Okumura K."/>
            <person name="Nagase T."/>
            <person name="Nomura N."/>
            <person name="Kikuchi H."/>
            <person name="Masuho Y."/>
            <person name="Yamashita R."/>
            <person name="Nakai K."/>
            <person name="Yada T."/>
            <person name="Nakamura Y."/>
            <person name="Ohara O."/>
            <person name="Isogai T."/>
            <person name="Sugano S."/>
        </authorList>
    </citation>
    <scope>NUCLEOTIDE SEQUENCE [LARGE SCALE MRNA]</scope>
    <source>
        <tissue>Thalamus</tissue>
    </source>
</reference>
<gene>
    <name type="primary">CAPN12</name>
</gene>
<proteinExistence type="evidence at protein level"/>
<dbReference type="EC" id="3.4.22.-"/>
<dbReference type="EMBL" id="AK127398">
    <property type="protein sequence ID" value="BAC86959.1"/>
    <property type="molecule type" value="mRNA"/>
</dbReference>
<dbReference type="CCDS" id="CCDS12519.1"/>
<dbReference type="RefSeq" id="NP_653292.2">
    <property type="nucleotide sequence ID" value="NM_144691.4"/>
</dbReference>
<dbReference type="RefSeq" id="XP_047294193.1">
    <property type="nucleotide sequence ID" value="XM_047438237.1"/>
</dbReference>
<dbReference type="RefSeq" id="XP_054187917.1">
    <property type="nucleotide sequence ID" value="XM_054331942.1"/>
</dbReference>
<dbReference type="SMR" id="Q6ZSI9"/>
<dbReference type="BioGRID" id="127107">
    <property type="interactions" value="43"/>
</dbReference>
<dbReference type="FunCoup" id="Q6ZSI9">
    <property type="interactions" value="143"/>
</dbReference>
<dbReference type="IntAct" id="Q6ZSI9">
    <property type="interactions" value="21"/>
</dbReference>
<dbReference type="STRING" id="9606.ENSP00000331636"/>
<dbReference type="MEROPS" id="C02.017"/>
<dbReference type="iPTMnet" id="Q6ZSI9"/>
<dbReference type="PhosphoSitePlus" id="Q6ZSI9"/>
<dbReference type="BioMuta" id="CAPN12"/>
<dbReference type="DMDM" id="54035703"/>
<dbReference type="MassIVE" id="Q6ZSI9"/>
<dbReference type="PaxDb" id="9606-ENSP00000331636"/>
<dbReference type="PeptideAtlas" id="Q6ZSI9"/>
<dbReference type="ProteomicsDB" id="68220"/>
<dbReference type="Antibodypedia" id="48135">
    <property type="antibodies" value="99 antibodies from 23 providers"/>
</dbReference>
<dbReference type="DNASU" id="147968"/>
<dbReference type="Ensembl" id="ENST00000328867.9">
    <property type="protein sequence ID" value="ENSP00000331636.3"/>
    <property type="gene ID" value="ENSG00000182472.9"/>
</dbReference>
<dbReference type="GeneID" id="147968"/>
<dbReference type="KEGG" id="hsa:147968"/>
<dbReference type="MANE-Select" id="ENST00000328867.9">
    <property type="protein sequence ID" value="ENSP00000331636.3"/>
    <property type="RefSeq nucleotide sequence ID" value="NM_144691.4"/>
    <property type="RefSeq protein sequence ID" value="NP_653292.2"/>
</dbReference>
<dbReference type="UCSC" id="uc002ojd.2">
    <property type="organism name" value="human"/>
</dbReference>
<dbReference type="AGR" id="HGNC:13249"/>
<dbReference type="CTD" id="147968"/>
<dbReference type="DisGeNET" id="147968"/>
<dbReference type="GeneCards" id="CAPN12"/>
<dbReference type="HGNC" id="HGNC:13249">
    <property type="gene designation" value="CAPN12"/>
</dbReference>
<dbReference type="HPA" id="ENSG00000182472">
    <property type="expression patterns" value="Group enriched (gallbladder, liver)"/>
</dbReference>
<dbReference type="MalaCards" id="CAPN12"/>
<dbReference type="MIM" id="608839">
    <property type="type" value="gene"/>
</dbReference>
<dbReference type="neXtProt" id="NX_Q6ZSI9"/>
<dbReference type="OpenTargets" id="ENSG00000182472"/>
<dbReference type="PharmGKB" id="PA134863447"/>
<dbReference type="VEuPathDB" id="HostDB:ENSG00000182472"/>
<dbReference type="eggNOG" id="KOG0045">
    <property type="taxonomic scope" value="Eukaryota"/>
</dbReference>
<dbReference type="GeneTree" id="ENSGT00940000161901"/>
<dbReference type="HOGENOM" id="CLU_010982_0_2_1"/>
<dbReference type="InParanoid" id="Q6ZSI9"/>
<dbReference type="OMA" id="THKMSLG"/>
<dbReference type="OrthoDB" id="424753at2759"/>
<dbReference type="PAN-GO" id="Q6ZSI9">
    <property type="GO annotations" value="3 GO annotations based on evolutionary models"/>
</dbReference>
<dbReference type="PhylomeDB" id="Q6ZSI9"/>
<dbReference type="TreeFam" id="TF314748"/>
<dbReference type="PathwayCommons" id="Q6ZSI9"/>
<dbReference type="Reactome" id="R-HSA-1474228">
    <property type="pathway name" value="Degradation of the extracellular matrix"/>
</dbReference>
<dbReference type="SignaLink" id="Q6ZSI9"/>
<dbReference type="BioGRID-ORCS" id="147968">
    <property type="hits" value="16 hits in 1153 CRISPR screens"/>
</dbReference>
<dbReference type="ChiTaRS" id="CAPN12">
    <property type="organism name" value="human"/>
</dbReference>
<dbReference type="GenomeRNAi" id="147968"/>
<dbReference type="Pharos" id="Q6ZSI9">
    <property type="development level" value="Tdark"/>
</dbReference>
<dbReference type="PRO" id="PR:Q6ZSI9"/>
<dbReference type="Proteomes" id="UP000005640">
    <property type="component" value="Chromosome 19"/>
</dbReference>
<dbReference type="RNAct" id="Q6ZSI9">
    <property type="molecule type" value="protein"/>
</dbReference>
<dbReference type="Bgee" id="ENSG00000182472">
    <property type="expression patterns" value="Expressed in pancreatic ductal cell and 141 other cell types or tissues"/>
</dbReference>
<dbReference type="ExpressionAtlas" id="Q6ZSI9">
    <property type="expression patterns" value="baseline and differential"/>
</dbReference>
<dbReference type="GO" id="GO:0005737">
    <property type="term" value="C:cytoplasm"/>
    <property type="evidence" value="ECO:0000318"/>
    <property type="project" value="GO_Central"/>
</dbReference>
<dbReference type="GO" id="GO:0005509">
    <property type="term" value="F:calcium ion binding"/>
    <property type="evidence" value="ECO:0007669"/>
    <property type="project" value="InterPro"/>
</dbReference>
<dbReference type="GO" id="GO:0004198">
    <property type="term" value="F:calcium-dependent cysteine-type endopeptidase activity"/>
    <property type="evidence" value="ECO:0000318"/>
    <property type="project" value="GO_Central"/>
</dbReference>
<dbReference type="GO" id="GO:0006508">
    <property type="term" value="P:proteolysis"/>
    <property type="evidence" value="ECO:0000318"/>
    <property type="project" value="GO_Central"/>
</dbReference>
<dbReference type="CDD" id="cd00214">
    <property type="entry name" value="Calpain_III"/>
    <property type="match status" value="1"/>
</dbReference>
<dbReference type="CDD" id="cd00044">
    <property type="entry name" value="CysPc"/>
    <property type="match status" value="1"/>
</dbReference>
<dbReference type="FunFam" id="2.60.120.380:FF:000011">
    <property type="entry name" value="Calpain 12"/>
    <property type="match status" value="1"/>
</dbReference>
<dbReference type="FunFam" id="1.10.238.10:FF:000225">
    <property type="entry name" value="Calpain-12"/>
    <property type="match status" value="1"/>
</dbReference>
<dbReference type="FunFam" id="3.90.70.10:FF:000464">
    <property type="entry name" value="Uncharacterized protein"/>
    <property type="match status" value="1"/>
</dbReference>
<dbReference type="Gene3D" id="2.60.120.380">
    <property type="match status" value="1"/>
</dbReference>
<dbReference type="Gene3D" id="3.90.70.10">
    <property type="entry name" value="Cysteine proteinases"/>
    <property type="match status" value="1"/>
</dbReference>
<dbReference type="Gene3D" id="1.10.238.10">
    <property type="entry name" value="EF-hand"/>
    <property type="match status" value="1"/>
</dbReference>
<dbReference type="InterPro" id="IPR033883">
    <property type="entry name" value="C2_III"/>
</dbReference>
<dbReference type="InterPro" id="IPR022684">
    <property type="entry name" value="Calpain_cysteine_protease"/>
</dbReference>
<dbReference type="InterPro" id="IPR022682">
    <property type="entry name" value="Calpain_domain_III"/>
</dbReference>
<dbReference type="InterPro" id="IPR022683">
    <property type="entry name" value="Calpain_III"/>
</dbReference>
<dbReference type="InterPro" id="IPR036213">
    <property type="entry name" value="Calpain_III_sf"/>
</dbReference>
<dbReference type="InterPro" id="IPR011992">
    <property type="entry name" value="EF-hand-dom_pair"/>
</dbReference>
<dbReference type="InterPro" id="IPR018247">
    <property type="entry name" value="EF_Hand_1_Ca_BS"/>
</dbReference>
<dbReference type="InterPro" id="IPR002048">
    <property type="entry name" value="EF_hand_dom"/>
</dbReference>
<dbReference type="InterPro" id="IPR038765">
    <property type="entry name" value="Papain-like_cys_pep_sf"/>
</dbReference>
<dbReference type="InterPro" id="IPR000169">
    <property type="entry name" value="Pept_cys_AS"/>
</dbReference>
<dbReference type="InterPro" id="IPR001300">
    <property type="entry name" value="Peptidase_C2_calpain_cat"/>
</dbReference>
<dbReference type="PANTHER" id="PTHR10183">
    <property type="entry name" value="CALPAIN"/>
    <property type="match status" value="1"/>
</dbReference>
<dbReference type="PANTHER" id="PTHR10183:SF280">
    <property type="entry name" value="CALPAIN-12"/>
    <property type="match status" value="1"/>
</dbReference>
<dbReference type="Pfam" id="PF01067">
    <property type="entry name" value="Calpain_III"/>
    <property type="match status" value="1"/>
</dbReference>
<dbReference type="Pfam" id="PF00648">
    <property type="entry name" value="Peptidase_C2"/>
    <property type="match status" value="1"/>
</dbReference>
<dbReference type="PRINTS" id="PR00704">
    <property type="entry name" value="CALPAIN"/>
</dbReference>
<dbReference type="SMART" id="SM00720">
    <property type="entry name" value="calpain_III"/>
    <property type="match status" value="1"/>
</dbReference>
<dbReference type="SMART" id="SM00230">
    <property type="entry name" value="CysPc"/>
    <property type="match status" value="1"/>
</dbReference>
<dbReference type="SUPFAM" id="SSF49758">
    <property type="entry name" value="Calpain large subunit, middle domain (domain III)"/>
    <property type="match status" value="1"/>
</dbReference>
<dbReference type="SUPFAM" id="SSF54001">
    <property type="entry name" value="Cysteine proteinases"/>
    <property type="match status" value="1"/>
</dbReference>
<dbReference type="SUPFAM" id="SSF47473">
    <property type="entry name" value="EF-hand"/>
    <property type="match status" value="1"/>
</dbReference>
<dbReference type="PROSITE" id="PS50203">
    <property type="entry name" value="CALPAIN_CAT"/>
    <property type="match status" value="1"/>
</dbReference>
<dbReference type="PROSITE" id="PS00018">
    <property type="entry name" value="EF_HAND_1"/>
    <property type="match status" value="1"/>
</dbReference>
<dbReference type="PROSITE" id="PS50222">
    <property type="entry name" value="EF_HAND_2"/>
    <property type="match status" value="1"/>
</dbReference>
<dbReference type="PROSITE" id="PS00139">
    <property type="entry name" value="THIOL_PROTEASE_CYS"/>
    <property type="match status" value="1"/>
</dbReference>